<feature type="chain" id="PRO_1000118259" description="ATP phosphoribosyltransferase">
    <location>
        <begin position="1"/>
        <end position="289"/>
    </location>
</feature>
<reference key="1">
    <citation type="journal article" date="2009" name="Appl. Environ. Microbiol.">
        <title>Three genomes from the phylum Acidobacteria provide insight into the lifestyles of these microorganisms in soils.</title>
        <authorList>
            <person name="Ward N.L."/>
            <person name="Challacombe J.F."/>
            <person name="Janssen P.H."/>
            <person name="Henrissat B."/>
            <person name="Coutinho P.M."/>
            <person name="Wu M."/>
            <person name="Xie G."/>
            <person name="Haft D.H."/>
            <person name="Sait M."/>
            <person name="Badger J."/>
            <person name="Barabote R.D."/>
            <person name="Bradley B."/>
            <person name="Brettin T.S."/>
            <person name="Brinkac L.M."/>
            <person name="Bruce D."/>
            <person name="Creasy T."/>
            <person name="Daugherty S.C."/>
            <person name="Davidsen T.M."/>
            <person name="DeBoy R.T."/>
            <person name="Detter J.C."/>
            <person name="Dodson R.J."/>
            <person name="Durkin A.S."/>
            <person name="Ganapathy A."/>
            <person name="Gwinn-Giglio M."/>
            <person name="Han C.S."/>
            <person name="Khouri H."/>
            <person name="Kiss H."/>
            <person name="Kothari S.P."/>
            <person name="Madupu R."/>
            <person name="Nelson K.E."/>
            <person name="Nelson W.C."/>
            <person name="Paulsen I."/>
            <person name="Penn K."/>
            <person name="Ren Q."/>
            <person name="Rosovitz M.J."/>
            <person name="Selengut J.D."/>
            <person name="Shrivastava S."/>
            <person name="Sullivan S.A."/>
            <person name="Tapia R."/>
            <person name="Thompson L.S."/>
            <person name="Watkins K.L."/>
            <person name="Yang Q."/>
            <person name="Yu C."/>
            <person name="Zafar N."/>
            <person name="Zhou L."/>
            <person name="Kuske C.R."/>
        </authorList>
    </citation>
    <scope>NUCLEOTIDE SEQUENCE [LARGE SCALE GENOMIC DNA]</scope>
    <source>
        <strain>Ellin6076</strain>
    </source>
</reference>
<accession>Q01ZU0</accession>
<gene>
    <name evidence="1" type="primary">hisG</name>
    <name type="ordered locus">Acid_3856</name>
</gene>
<keyword id="KW-0028">Amino-acid biosynthesis</keyword>
<keyword id="KW-0067">ATP-binding</keyword>
<keyword id="KW-0963">Cytoplasm</keyword>
<keyword id="KW-0328">Glycosyltransferase</keyword>
<keyword id="KW-0368">Histidine biosynthesis</keyword>
<keyword id="KW-0460">Magnesium</keyword>
<keyword id="KW-0479">Metal-binding</keyword>
<keyword id="KW-0547">Nucleotide-binding</keyword>
<keyword id="KW-0808">Transferase</keyword>
<name>HIS1_SOLUE</name>
<organism>
    <name type="scientific">Solibacter usitatus (strain Ellin6076)</name>
    <dbReference type="NCBI Taxonomy" id="234267"/>
    <lineage>
        <taxon>Bacteria</taxon>
        <taxon>Pseudomonadati</taxon>
        <taxon>Acidobacteriota</taxon>
        <taxon>Terriglobia</taxon>
        <taxon>Bryobacterales</taxon>
        <taxon>Solibacteraceae</taxon>
        <taxon>Candidatus Solibacter</taxon>
    </lineage>
</organism>
<dbReference type="EC" id="2.4.2.17" evidence="1"/>
<dbReference type="EMBL" id="CP000473">
    <property type="protein sequence ID" value="ABJ84825.1"/>
    <property type="molecule type" value="Genomic_DNA"/>
</dbReference>
<dbReference type="SMR" id="Q01ZU0"/>
<dbReference type="FunCoup" id="Q01ZU0">
    <property type="interactions" value="517"/>
</dbReference>
<dbReference type="STRING" id="234267.Acid_3856"/>
<dbReference type="KEGG" id="sus:Acid_3856"/>
<dbReference type="eggNOG" id="COG0040">
    <property type="taxonomic scope" value="Bacteria"/>
</dbReference>
<dbReference type="HOGENOM" id="CLU_038115_1_1_0"/>
<dbReference type="InParanoid" id="Q01ZU0"/>
<dbReference type="OrthoDB" id="9801867at2"/>
<dbReference type="UniPathway" id="UPA00031">
    <property type="reaction ID" value="UER00006"/>
</dbReference>
<dbReference type="GO" id="GO:0005737">
    <property type="term" value="C:cytoplasm"/>
    <property type="evidence" value="ECO:0007669"/>
    <property type="project" value="UniProtKB-SubCell"/>
</dbReference>
<dbReference type="GO" id="GO:0005524">
    <property type="term" value="F:ATP binding"/>
    <property type="evidence" value="ECO:0007669"/>
    <property type="project" value="UniProtKB-KW"/>
</dbReference>
<dbReference type="GO" id="GO:0003879">
    <property type="term" value="F:ATP phosphoribosyltransferase activity"/>
    <property type="evidence" value="ECO:0007669"/>
    <property type="project" value="UniProtKB-UniRule"/>
</dbReference>
<dbReference type="GO" id="GO:0000287">
    <property type="term" value="F:magnesium ion binding"/>
    <property type="evidence" value="ECO:0007669"/>
    <property type="project" value="UniProtKB-UniRule"/>
</dbReference>
<dbReference type="GO" id="GO:0000105">
    <property type="term" value="P:L-histidine biosynthetic process"/>
    <property type="evidence" value="ECO:0007669"/>
    <property type="project" value="UniProtKB-UniRule"/>
</dbReference>
<dbReference type="CDD" id="cd13593">
    <property type="entry name" value="PBP2_HisGL3"/>
    <property type="match status" value="1"/>
</dbReference>
<dbReference type="FunFam" id="3.30.70.120:FF:000002">
    <property type="entry name" value="ATP phosphoribosyltransferase"/>
    <property type="match status" value="1"/>
</dbReference>
<dbReference type="Gene3D" id="3.30.70.120">
    <property type="match status" value="1"/>
</dbReference>
<dbReference type="Gene3D" id="3.40.190.10">
    <property type="entry name" value="Periplasmic binding protein-like II"/>
    <property type="match status" value="2"/>
</dbReference>
<dbReference type="HAMAP" id="MF_00079">
    <property type="entry name" value="HisG_Long"/>
    <property type="match status" value="1"/>
</dbReference>
<dbReference type="InterPro" id="IPR020621">
    <property type="entry name" value="ATP-PRT_HisG_long"/>
</dbReference>
<dbReference type="InterPro" id="IPR013820">
    <property type="entry name" value="ATP_PRibTrfase_cat"/>
</dbReference>
<dbReference type="InterPro" id="IPR001348">
    <property type="entry name" value="ATP_PRibTrfase_HisG"/>
</dbReference>
<dbReference type="InterPro" id="IPR013115">
    <property type="entry name" value="HisG_C"/>
</dbReference>
<dbReference type="InterPro" id="IPR011322">
    <property type="entry name" value="N-reg_PII-like_a/b"/>
</dbReference>
<dbReference type="InterPro" id="IPR015867">
    <property type="entry name" value="N-reg_PII/ATP_PRibTrfase_C"/>
</dbReference>
<dbReference type="NCBIfam" id="TIGR00070">
    <property type="entry name" value="hisG"/>
    <property type="match status" value="1"/>
</dbReference>
<dbReference type="NCBIfam" id="TIGR03455">
    <property type="entry name" value="HisG_C-term"/>
    <property type="match status" value="1"/>
</dbReference>
<dbReference type="PANTHER" id="PTHR21403:SF10">
    <property type="entry name" value="ATP PHOSPHORIBOSYLTRANSFERASE"/>
    <property type="match status" value="1"/>
</dbReference>
<dbReference type="PANTHER" id="PTHR21403">
    <property type="entry name" value="ATP PHOSPHORIBOSYLTRANSFERASE ATP-PRTASE"/>
    <property type="match status" value="1"/>
</dbReference>
<dbReference type="Pfam" id="PF01634">
    <property type="entry name" value="HisG"/>
    <property type="match status" value="1"/>
</dbReference>
<dbReference type="Pfam" id="PF08029">
    <property type="entry name" value="HisG_C"/>
    <property type="match status" value="1"/>
</dbReference>
<dbReference type="SUPFAM" id="SSF54913">
    <property type="entry name" value="GlnB-like"/>
    <property type="match status" value="1"/>
</dbReference>
<dbReference type="SUPFAM" id="SSF53850">
    <property type="entry name" value="Periplasmic binding protein-like II"/>
    <property type="match status" value="1"/>
</dbReference>
<protein>
    <recommendedName>
        <fullName evidence="1">ATP phosphoribosyltransferase</fullName>
        <shortName evidence="1">ATP-PRT</shortName>
        <shortName evidence="1">ATP-PRTase</shortName>
        <ecNumber evidence="1">2.4.2.17</ecNumber>
    </recommendedName>
</protein>
<sequence>MLLKLGIPKGSLENATIDLFRRAGFQITTSSRSYFPGIDDPEIECMLIRAQEMARYVEDGILDSGLTGRDWIEENEAAIVPVADLIYAKQSFGKVRWVLAVPEASSFRTVHDLEGKIIATELVATTKRYMAKHGVKAKVEFSWGATEVKPPVLADAIVEVTETGSSLRANKLKIIDTVLESNTQLIANKASWEDPEKRRKLEDIRMLLQGAINALGKVGLMLNVHKDNLKAVLGVLPALKRPTISHLSDDEWLAVNTILDESTVRDIIPRLKQAGGEGIVEYPLNKIVL</sequence>
<proteinExistence type="inferred from homology"/>
<comment type="function">
    <text evidence="1">Catalyzes the condensation of ATP and 5-phosphoribose 1-diphosphate to form N'-(5'-phosphoribosyl)-ATP (PR-ATP). Has a crucial role in the pathway because the rate of histidine biosynthesis seems to be controlled primarily by regulation of HisG enzymatic activity.</text>
</comment>
<comment type="catalytic activity">
    <reaction evidence="1">
        <text>1-(5-phospho-beta-D-ribosyl)-ATP + diphosphate = 5-phospho-alpha-D-ribose 1-diphosphate + ATP</text>
        <dbReference type="Rhea" id="RHEA:18473"/>
        <dbReference type="ChEBI" id="CHEBI:30616"/>
        <dbReference type="ChEBI" id="CHEBI:33019"/>
        <dbReference type="ChEBI" id="CHEBI:58017"/>
        <dbReference type="ChEBI" id="CHEBI:73183"/>
        <dbReference type="EC" id="2.4.2.17"/>
    </reaction>
</comment>
<comment type="cofactor">
    <cofactor evidence="1">
        <name>Mg(2+)</name>
        <dbReference type="ChEBI" id="CHEBI:18420"/>
    </cofactor>
</comment>
<comment type="activity regulation">
    <text evidence="1">Feedback inhibited by histidine.</text>
</comment>
<comment type="pathway">
    <text evidence="1">Amino-acid biosynthesis; L-histidine biosynthesis; L-histidine from 5-phospho-alpha-D-ribose 1-diphosphate: step 1/9.</text>
</comment>
<comment type="subcellular location">
    <subcellularLocation>
        <location evidence="1">Cytoplasm</location>
    </subcellularLocation>
</comment>
<comment type="similarity">
    <text evidence="1">Belongs to the ATP phosphoribosyltransferase family. Long subfamily.</text>
</comment>
<evidence type="ECO:0000255" key="1">
    <source>
        <dbReference type="HAMAP-Rule" id="MF_00079"/>
    </source>
</evidence>